<sequence>MTPGELRRLYLIVRVFLSYGLDELIPQMRLTLPLRVGRRLLFWMPNRHADKPLGERLRLALQELGPVWIKFGQMMSTRRDLFPPQIADQLTLLQDRVAPFDGALARKHIELAMGGPLETWFDDFDQQALASASIAQVHTARLKTTGQEVVLKVIRPDIRPIIKADVRLMYRLAAWVPKLMPDGRRLRPREVVREYEKTLLDELNLLREAANAIQLRRNFDGSPMLYVPEVYSDYCRESVLVMERIYGIPVSDIPTLEKQGTNMKLLAERGVQVFFTQVFRDSFFHADMHPGNIFVSYEHPEDPCYIGIDCGIVGSLNKDDKRYLAENFIAFFNRDYRKVAELHVDSGWVPRDTNVEDFEFAIRTVCEPIFEKPLSEISFGNVLLNLFNTARRFNMEVQPQLVLLQKTLLYVEGLGRQLYPQLDLWTTAKPFLESWMRDQVGIPAVIRALKEKAPFWAEKLPELPELFYDSLQQHKLLQQSVDKLTNQMQAQRVRQGQSRYLFGVGATLLVSGTILLSGDVEVFPAWLIAAGIVSWVIGWKRTT</sequence>
<organism>
    <name type="scientific">Serratia proteamaculans (strain 568)</name>
    <dbReference type="NCBI Taxonomy" id="399741"/>
    <lineage>
        <taxon>Bacteria</taxon>
        <taxon>Pseudomonadati</taxon>
        <taxon>Pseudomonadota</taxon>
        <taxon>Gammaproteobacteria</taxon>
        <taxon>Enterobacterales</taxon>
        <taxon>Yersiniaceae</taxon>
        <taxon>Serratia</taxon>
    </lineage>
</organism>
<proteinExistence type="inferred from homology"/>
<name>UBIB_SERP5</name>
<reference key="1">
    <citation type="submission" date="2007-09" db="EMBL/GenBank/DDBJ databases">
        <title>Complete sequence of chromosome of Serratia proteamaculans 568.</title>
        <authorList>
            <consortium name="US DOE Joint Genome Institute"/>
            <person name="Copeland A."/>
            <person name="Lucas S."/>
            <person name="Lapidus A."/>
            <person name="Barry K."/>
            <person name="Glavina del Rio T."/>
            <person name="Dalin E."/>
            <person name="Tice H."/>
            <person name="Pitluck S."/>
            <person name="Chain P."/>
            <person name="Malfatti S."/>
            <person name="Shin M."/>
            <person name="Vergez L."/>
            <person name="Schmutz J."/>
            <person name="Larimer F."/>
            <person name="Land M."/>
            <person name="Hauser L."/>
            <person name="Kyrpides N."/>
            <person name="Kim E."/>
            <person name="Taghavi S."/>
            <person name="Newman L."/>
            <person name="Vangronsveld J."/>
            <person name="van der Lelie D."/>
            <person name="Richardson P."/>
        </authorList>
    </citation>
    <scope>NUCLEOTIDE SEQUENCE [LARGE SCALE GENOMIC DNA]</scope>
    <source>
        <strain>568</strain>
    </source>
</reference>
<comment type="function">
    <text evidence="1">Is probably a protein kinase regulator of UbiI activity which is involved in aerobic coenzyme Q (ubiquinone) biosynthesis.</text>
</comment>
<comment type="pathway">
    <text>Cofactor biosynthesis; ubiquinone biosynthesis [regulation].</text>
</comment>
<comment type="subcellular location">
    <subcellularLocation>
        <location evidence="1">Cell inner membrane</location>
        <topology evidence="1">Multi-pass membrane protein</topology>
    </subcellularLocation>
</comment>
<comment type="similarity">
    <text evidence="1">Belongs to the ABC1 family. UbiB subfamily.</text>
</comment>
<evidence type="ECO:0000255" key="1">
    <source>
        <dbReference type="HAMAP-Rule" id="MF_00414"/>
    </source>
</evidence>
<protein>
    <recommendedName>
        <fullName evidence="1">Probable protein kinase UbiB</fullName>
        <ecNumber evidence="1">2.7.-.-</ecNumber>
    </recommendedName>
    <alternativeName>
        <fullName evidence="1">Ubiquinone biosynthesis protein UbiB</fullName>
    </alternativeName>
</protein>
<feature type="chain" id="PRO_1000060070" description="Probable protein kinase UbiB">
    <location>
        <begin position="1"/>
        <end position="543"/>
    </location>
</feature>
<feature type="transmembrane region" description="Helical" evidence="1">
    <location>
        <begin position="498"/>
        <end position="518"/>
    </location>
</feature>
<feature type="transmembrane region" description="Helical" evidence="1">
    <location>
        <begin position="519"/>
        <end position="539"/>
    </location>
</feature>
<feature type="domain" description="Protein kinase" evidence="1">
    <location>
        <begin position="123"/>
        <end position="501"/>
    </location>
</feature>
<feature type="active site" description="Proton acceptor" evidence="1">
    <location>
        <position position="287"/>
    </location>
</feature>
<feature type="binding site" evidence="1">
    <location>
        <begin position="129"/>
        <end position="137"/>
    </location>
    <ligand>
        <name>ATP</name>
        <dbReference type="ChEBI" id="CHEBI:30616"/>
    </ligand>
</feature>
<feature type="binding site" evidence="1">
    <location>
        <position position="152"/>
    </location>
    <ligand>
        <name>ATP</name>
        <dbReference type="ChEBI" id="CHEBI:30616"/>
    </ligand>
</feature>
<dbReference type="EC" id="2.7.-.-" evidence="1"/>
<dbReference type="EMBL" id="CP000826">
    <property type="protein sequence ID" value="ABV39360.1"/>
    <property type="molecule type" value="Genomic_DNA"/>
</dbReference>
<dbReference type="SMR" id="A8G8C0"/>
<dbReference type="STRING" id="399741.Spro_0250"/>
<dbReference type="KEGG" id="spe:Spro_0250"/>
<dbReference type="eggNOG" id="COG0661">
    <property type="taxonomic scope" value="Bacteria"/>
</dbReference>
<dbReference type="HOGENOM" id="CLU_006533_0_0_6"/>
<dbReference type="OrthoDB" id="9795390at2"/>
<dbReference type="UniPathway" id="UPA00232"/>
<dbReference type="GO" id="GO:0005886">
    <property type="term" value="C:plasma membrane"/>
    <property type="evidence" value="ECO:0007669"/>
    <property type="project" value="UniProtKB-SubCell"/>
</dbReference>
<dbReference type="GO" id="GO:0005524">
    <property type="term" value="F:ATP binding"/>
    <property type="evidence" value="ECO:0007669"/>
    <property type="project" value="UniProtKB-KW"/>
</dbReference>
<dbReference type="GO" id="GO:0004672">
    <property type="term" value="F:protein kinase activity"/>
    <property type="evidence" value="ECO:0007669"/>
    <property type="project" value="UniProtKB-UniRule"/>
</dbReference>
<dbReference type="GO" id="GO:0010795">
    <property type="term" value="P:regulation of ubiquinone biosynthetic process"/>
    <property type="evidence" value="ECO:0007669"/>
    <property type="project" value="UniProtKB-UniRule"/>
</dbReference>
<dbReference type="GO" id="GO:0006744">
    <property type="term" value="P:ubiquinone biosynthetic process"/>
    <property type="evidence" value="ECO:0007669"/>
    <property type="project" value="UniProtKB-UniPathway"/>
</dbReference>
<dbReference type="CDD" id="cd13972">
    <property type="entry name" value="UbiB"/>
    <property type="match status" value="1"/>
</dbReference>
<dbReference type="HAMAP" id="MF_00414">
    <property type="entry name" value="UbiB"/>
    <property type="match status" value="1"/>
</dbReference>
<dbReference type="InterPro" id="IPR004147">
    <property type="entry name" value="ABC1_dom"/>
</dbReference>
<dbReference type="InterPro" id="IPR011009">
    <property type="entry name" value="Kinase-like_dom_sf"/>
</dbReference>
<dbReference type="InterPro" id="IPR010232">
    <property type="entry name" value="UbiB"/>
</dbReference>
<dbReference type="InterPro" id="IPR045308">
    <property type="entry name" value="UbiB_bact"/>
</dbReference>
<dbReference type="InterPro" id="IPR050154">
    <property type="entry name" value="UbiB_kinase"/>
</dbReference>
<dbReference type="NCBIfam" id="NF003404">
    <property type="entry name" value="PRK04750.1"/>
    <property type="match status" value="1"/>
</dbReference>
<dbReference type="NCBIfam" id="TIGR01982">
    <property type="entry name" value="UbiB"/>
    <property type="match status" value="1"/>
</dbReference>
<dbReference type="PANTHER" id="PTHR10566">
    <property type="entry name" value="CHAPERONE-ACTIVITY OF BC1 COMPLEX CABC1 -RELATED"/>
    <property type="match status" value="1"/>
</dbReference>
<dbReference type="PANTHER" id="PTHR10566:SF113">
    <property type="entry name" value="PROTEIN ACTIVITY OF BC1 COMPLEX KINASE 7, CHLOROPLASTIC"/>
    <property type="match status" value="1"/>
</dbReference>
<dbReference type="Pfam" id="PF03109">
    <property type="entry name" value="ABC1"/>
    <property type="match status" value="1"/>
</dbReference>
<dbReference type="SUPFAM" id="SSF56112">
    <property type="entry name" value="Protein kinase-like (PK-like)"/>
    <property type="match status" value="1"/>
</dbReference>
<gene>
    <name evidence="1" type="primary">ubiB</name>
    <name type="ordered locus">Spro_0250</name>
</gene>
<accession>A8G8C0</accession>
<keyword id="KW-0067">ATP-binding</keyword>
<keyword id="KW-0997">Cell inner membrane</keyword>
<keyword id="KW-1003">Cell membrane</keyword>
<keyword id="KW-0418">Kinase</keyword>
<keyword id="KW-0472">Membrane</keyword>
<keyword id="KW-0547">Nucleotide-binding</keyword>
<keyword id="KW-0808">Transferase</keyword>
<keyword id="KW-0812">Transmembrane</keyword>
<keyword id="KW-1133">Transmembrane helix</keyword>
<keyword id="KW-0831">Ubiquinone biosynthesis</keyword>